<evidence type="ECO:0000255" key="1">
    <source>
        <dbReference type="HAMAP-Rule" id="MF_00374"/>
    </source>
</evidence>
<evidence type="ECO:0000305" key="2"/>
<dbReference type="EMBL" id="CP000094">
    <property type="protein sequence ID" value="ABA76808.1"/>
    <property type="molecule type" value="Genomic_DNA"/>
</dbReference>
<dbReference type="RefSeq" id="WP_002555481.1">
    <property type="nucleotide sequence ID" value="NC_007492.2"/>
</dbReference>
<dbReference type="SMR" id="Q3K5Z6"/>
<dbReference type="GeneID" id="98285430"/>
<dbReference type="KEGG" id="pfo:Pfl01_5071"/>
<dbReference type="eggNOG" id="COG0255">
    <property type="taxonomic scope" value="Bacteria"/>
</dbReference>
<dbReference type="HOGENOM" id="CLU_158491_1_2_6"/>
<dbReference type="Proteomes" id="UP000002704">
    <property type="component" value="Chromosome"/>
</dbReference>
<dbReference type="GO" id="GO:0022625">
    <property type="term" value="C:cytosolic large ribosomal subunit"/>
    <property type="evidence" value="ECO:0007669"/>
    <property type="project" value="TreeGrafter"/>
</dbReference>
<dbReference type="GO" id="GO:0003735">
    <property type="term" value="F:structural constituent of ribosome"/>
    <property type="evidence" value="ECO:0007669"/>
    <property type="project" value="InterPro"/>
</dbReference>
<dbReference type="GO" id="GO:0006412">
    <property type="term" value="P:translation"/>
    <property type="evidence" value="ECO:0007669"/>
    <property type="project" value="UniProtKB-UniRule"/>
</dbReference>
<dbReference type="CDD" id="cd00427">
    <property type="entry name" value="Ribosomal_L29_HIP"/>
    <property type="match status" value="1"/>
</dbReference>
<dbReference type="FunFam" id="1.10.287.310:FF:000001">
    <property type="entry name" value="50S ribosomal protein L29"/>
    <property type="match status" value="1"/>
</dbReference>
<dbReference type="Gene3D" id="1.10.287.310">
    <property type="match status" value="1"/>
</dbReference>
<dbReference type="HAMAP" id="MF_00374">
    <property type="entry name" value="Ribosomal_uL29"/>
    <property type="match status" value="1"/>
</dbReference>
<dbReference type="InterPro" id="IPR050063">
    <property type="entry name" value="Ribosomal_protein_uL29"/>
</dbReference>
<dbReference type="InterPro" id="IPR001854">
    <property type="entry name" value="Ribosomal_uL29"/>
</dbReference>
<dbReference type="InterPro" id="IPR018254">
    <property type="entry name" value="Ribosomal_uL29_CS"/>
</dbReference>
<dbReference type="InterPro" id="IPR036049">
    <property type="entry name" value="Ribosomal_uL29_sf"/>
</dbReference>
<dbReference type="NCBIfam" id="TIGR00012">
    <property type="entry name" value="L29"/>
    <property type="match status" value="1"/>
</dbReference>
<dbReference type="PANTHER" id="PTHR10916">
    <property type="entry name" value="60S RIBOSOMAL PROTEIN L35/50S RIBOSOMAL PROTEIN L29"/>
    <property type="match status" value="1"/>
</dbReference>
<dbReference type="PANTHER" id="PTHR10916:SF0">
    <property type="entry name" value="LARGE RIBOSOMAL SUBUNIT PROTEIN UL29C"/>
    <property type="match status" value="1"/>
</dbReference>
<dbReference type="Pfam" id="PF00831">
    <property type="entry name" value="Ribosomal_L29"/>
    <property type="match status" value="1"/>
</dbReference>
<dbReference type="SUPFAM" id="SSF46561">
    <property type="entry name" value="Ribosomal protein L29 (L29p)"/>
    <property type="match status" value="1"/>
</dbReference>
<dbReference type="PROSITE" id="PS00579">
    <property type="entry name" value="RIBOSOMAL_L29"/>
    <property type="match status" value="1"/>
</dbReference>
<keyword id="KW-0687">Ribonucleoprotein</keyword>
<keyword id="KW-0689">Ribosomal protein</keyword>
<feature type="chain" id="PRO_1000007568" description="Large ribosomal subunit protein uL29">
    <location>
        <begin position="1"/>
        <end position="63"/>
    </location>
</feature>
<proteinExistence type="inferred from homology"/>
<comment type="similarity">
    <text evidence="1">Belongs to the universal ribosomal protein uL29 family.</text>
</comment>
<reference key="1">
    <citation type="journal article" date="2009" name="Genome Biol.">
        <title>Genomic and genetic analyses of diversity and plant interactions of Pseudomonas fluorescens.</title>
        <authorList>
            <person name="Silby M.W."/>
            <person name="Cerdeno-Tarraga A.M."/>
            <person name="Vernikos G.S."/>
            <person name="Giddens S.R."/>
            <person name="Jackson R.W."/>
            <person name="Preston G.M."/>
            <person name="Zhang X.-X."/>
            <person name="Moon C.D."/>
            <person name="Gehrig S.M."/>
            <person name="Godfrey S.A.C."/>
            <person name="Knight C.G."/>
            <person name="Malone J.G."/>
            <person name="Robinson Z."/>
            <person name="Spiers A.J."/>
            <person name="Harris S."/>
            <person name="Challis G.L."/>
            <person name="Yaxley A.M."/>
            <person name="Harris D."/>
            <person name="Seeger K."/>
            <person name="Murphy L."/>
            <person name="Rutter S."/>
            <person name="Squares R."/>
            <person name="Quail M.A."/>
            <person name="Saunders E."/>
            <person name="Mavromatis K."/>
            <person name="Brettin T.S."/>
            <person name="Bentley S.D."/>
            <person name="Hothersall J."/>
            <person name="Stephens E."/>
            <person name="Thomas C.M."/>
            <person name="Parkhill J."/>
            <person name="Levy S.B."/>
            <person name="Rainey P.B."/>
            <person name="Thomson N.R."/>
        </authorList>
    </citation>
    <scope>NUCLEOTIDE SEQUENCE [LARGE SCALE GENOMIC DNA]</scope>
    <source>
        <strain>Pf0-1</strain>
    </source>
</reference>
<name>RL29_PSEPF</name>
<gene>
    <name evidence="1" type="primary">rpmC</name>
    <name type="ordered locus">Pfl01_5071</name>
</gene>
<accession>Q3K5Z6</accession>
<sequence length="63" mass="7172">MKANELREKSAQQLNEQLLGLLRDQFNLRMQKATGQLGQSHLLSQVKRDIARVKTVLNQQAGK</sequence>
<protein>
    <recommendedName>
        <fullName evidence="1">Large ribosomal subunit protein uL29</fullName>
    </recommendedName>
    <alternativeName>
        <fullName evidence="2">50S ribosomal protein L29</fullName>
    </alternativeName>
</protein>
<organism>
    <name type="scientific">Pseudomonas fluorescens (strain Pf0-1)</name>
    <dbReference type="NCBI Taxonomy" id="205922"/>
    <lineage>
        <taxon>Bacteria</taxon>
        <taxon>Pseudomonadati</taxon>
        <taxon>Pseudomonadota</taxon>
        <taxon>Gammaproteobacteria</taxon>
        <taxon>Pseudomonadales</taxon>
        <taxon>Pseudomonadaceae</taxon>
        <taxon>Pseudomonas</taxon>
    </lineage>
</organism>